<feature type="chain" id="PRO_0000182422" description="Signal transducer and activator of transcription 5A">
    <location>
        <begin position="1"/>
        <end position="794"/>
    </location>
</feature>
<feature type="domain" description="SH2" evidence="7">
    <location>
        <begin position="589"/>
        <end position="686"/>
    </location>
</feature>
<feature type="region of interest" description="Disordered" evidence="8">
    <location>
        <begin position="771"/>
        <end position="794"/>
    </location>
</feature>
<feature type="modified residue" description="Phosphotyrosine" evidence="3">
    <location>
        <position position="90"/>
    </location>
</feature>
<feature type="modified residue" description="Phosphoserine" evidence="3">
    <location>
        <position position="128"/>
    </location>
</feature>
<feature type="modified residue" description="Phosphotyrosine" evidence="3">
    <location>
        <position position="682"/>
    </location>
</feature>
<feature type="modified residue" description="Phosphotyrosine; by JAK2" evidence="5">
    <location>
        <position position="694"/>
    </location>
</feature>
<feature type="sequence conflict" description="In Ref. 1; CAA96563." evidence="9" ref="1">
    <original>H</original>
    <variation>D</variation>
    <location>
        <position position="25"/>
    </location>
</feature>
<feature type="sequence conflict" description="In Ref. 2; CAB52173." evidence="9" ref="2">
    <original>R</original>
    <variation>C</variation>
    <location>
        <position position="217"/>
    </location>
</feature>
<feature type="sequence conflict" description="In Ref. 2." evidence="9" ref="2">
    <original>TFIIEKQPPQVLKTQTKFAATVRLLVGGKLNVHMNPPQVKATIISEQQAKSLLKNENTRNECSGEILNNCCVMEYHQATGTLSAHFRNM</original>
    <variation>ECSGEILNNCCVMEYHQATGTLSAHFRNMHLHHREAAPSGPEDPDQVRGHRAPAGGWEAERAHEPPPGEGHHHQRAAGQVTAQEREHPQ</variation>
    <location>
        <begin position="331"/>
        <end position="419"/>
    </location>
</feature>
<feature type="sequence conflict" description="In Ref. 1; CAA96563." evidence="9" ref="1">
    <original>Q</original>
    <variation>L</variation>
    <location>
        <position position="602"/>
    </location>
</feature>
<feature type="sequence conflict" description="In Ref. 1; CAA96563." evidence="9" ref="1">
    <original>L</original>
    <variation>M</variation>
    <location>
        <position position="617"/>
    </location>
</feature>
<dbReference type="EMBL" id="Z72482">
    <property type="protein sequence ID" value="CAA96563.1"/>
    <property type="molecule type" value="mRNA"/>
</dbReference>
<dbReference type="EMBL" id="AJ242522">
    <property type="protein sequence ID" value="CAB52173.1"/>
    <property type="molecule type" value="Genomic_DNA"/>
</dbReference>
<dbReference type="EMBL" id="AJ237937">
    <property type="protein sequence ID" value="CAB52173.1"/>
    <property type="status" value="JOINED"/>
    <property type="molecule type" value="Genomic_DNA"/>
</dbReference>
<dbReference type="EMBL" id="AJ223573">
    <property type="protein sequence ID" value="CAA11440.1"/>
    <property type="molecule type" value="Genomic_DNA"/>
</dbReference>
<dbReference type="EMBL" id="U96644">
    <property type="protein sequence ID" value="AAB57696.1"/>
    <property type="molecule type" value="Genomic_DNA"/>
</dbReference>
<dbReference type="EMBL" id="AF079568">
    <property type="protein sequence ID" value="AAC71005.1"/>
    <property type="molecule type" value="Genomic_DNA"/>
</dbReference>
<dbReference type="EMBL" id="AF250911">
    <property type="protein sequence ID" value="AAF72972.1"/>
    <property type="molecule type" value="Genomic_DNA"/>
</dbReference>
<dbReference type="RefSeq" id="NP_001012691.1">
    <property type="nucleotide sequence ID" value="NM_001012673.1"/>
</dbReference>
<dbReference type="SMR" id="Q95115"/>
<dbReference type="FunCoup" id="Q95115">
    <property type="interactions" value="1282"/>
</dbReference>
<dbReference type="STRING" id="9913.ENSBTAP00000034715"/>
<dbReference type="PaxDb" id="9913-ENSBTAP00000034715"/>
<dbReference type="Ensembl" id="ENSBTAT00000073514.2">
    <property type="protein sequence ID" value="ENSBTAP00000067878.1"/>
    <property type="gene ID" value="ENSBTAG00000009496.7"/>
</dbReference>
<dbReference type="GeneID" id="282375"/>
<dbReference type="KEGG" id="bta:282375"/>
<dbReference type="CTD" id="6776"/>
<dbReference type="VEuPathDB" id="HostDB:ENSBTAG00000009496"/>
<dbReference type="VGNC" id="VGNC:35372">
    <property type="gene designation" value="STAT5A"/>
</dbReference>
<dbReference type="eggNOG" id="KOG3667">
    <property type="taxonomic scope" value="Eukaryota"/>
</dbReference>
<dbReference type="GeneTree" id="ENSGT01080000257420"/>
<dbReference type="InParanoid" id="Q95115"/>
<dbReference type="OMA" id="FDWKNRQ"/>
<dbReference type="OrthoDB" id="19300at2759"/>
<dbReference type="Reactome" id="R-BTA-1251985">
    <property type="pathway name" value="Nuclear signaling by ERBB4"/>
</dbReference>
<dbReference type="Reactome" id="R-BTA-1266695">
    <property type="pathway name" value="Interleukin-7 signaling"/>
</dbReference>
<dbReference type="Reactome" id="R-BTA-1433557">
    <property type="pathway name" value="Signaling by SCF-KIT"/>
</dbReference>
<dbReference type="Reactome" id="R-BTA-186763">
    <property type="pathway name" value="Downstream signal transduction"/>
</dbReference>
<dbReference type="Reactome" id="R-BTA-512988">
    <property type="pathway name" value="Interleukin-3, Interleukin-5 and GM-CSF signaling"/>
</dbReference>
<dbReference type="Reactome" id="R-BTA-8854691">
    <property type="pathway name" value="Interleukin-20 family signaling"/>
</dbReference>
<dbReference type="Reactome" id="R-BTA-8983432">
    <property type="pathway name" value="Interleukin-15 signaling"/>
</dbReference>
<dbReference type="Reactome" id="R-BTA-8985947">
    <property type="pathway name" value="Interleukin-9 signaling"/>
</dbReference>
<dbReference type="Reactome" id="R-BTA-9020558">
    <property type="pathway name" value="Interleukin-2 signaling"/>
</dbReference>
<dbReference type="Reactome" id="R-BTA-9020958">
    <property type="pathway name" value="Interleukin-21 signaling"/>
</dbReference>
<dbReference type="Proteomes" id="UP000009136">
    <property type="component" value="Chromosome 19"/>
</dbReference>
<dbReference type="Bgee" id="ENSBTAG00000009496">
    <property type="expression patterns" value="Expressed in parenchyma of mammary gland and 105 other cell types or tissues"/>
</dbReference>
<dbReference type="GO" id="GO:0005737">
    <property type="term" value="C:cytoplasm"/>
    <property type="evidence" value="ECO:0000250"/>
    <property type="project" value="AgBase"/>
</dbReference>
<dbReference type="GO" id="GO:0005829">
    <property type="term" value="C:cytosol"/>
    <property type="evidence" value="ECO:0007669"/>
    <property type="project" value="UniProtKB-ARBA"/>
</dbReference>
<dbReference type="GO" id="GO:0005634">
    <property type="term" value="C:nucleus"/>
    <property type="evidence" value="ECO:0000250"/>
    <property type="project" value="AgBase"/>
</dbReference>
<dbReference type="GO" id="GO:0090575">
    <property type="term" value="C:RNA polymerase II transcription regulator complex"/>
    <property type="evidence" value="ECO:0000318"/>
    <property type="project" value="GO_Central"/>
</dbReference>
<dbReference type="GO" id="GO:0003677">
    <property type="term" value="F:DNA binding"/>
    <property type="evidence" value="ECO:0000250"/>
    <property type="project" value="AgBase"/>
</dbReference>
<dbReference type="GO" id="GO:0000981">
    <property type="term" value="F:DNA-binding transcription factor activity, RNA polymerase II-specific"/>
    <property type="evidence" value="ECO:0000318"/>
    <property type="project" value="GO_Central"/>
</dbReference>
<dbReference type="GO" id="GO:0000978">
    <property type="term" value="F:RNA polymerase II cis-regulatory region sequence-specific DNA binding"/>
    <property type="evidence" value="ECO:0000318"/>
    <property type="project" value="GO_Central"/>
</dbReference>
<dbReference type="GO" id="GO:0007259">
    <property type="term" value="P:cell surface receptor signaling pathway via JAK-STAT"/>
    <property type="evidence" value="ECO:0000250"/>
    <property type="project" value="AgBase"/>
</dbReference>
<dbReference type="GO" id="GO:0019221">
    <property type="term" value="P:cytokine-mediated signaling pathway"/>
    <property type="evidence" value="ECO:0000250"/>
    <property type="project" value="AgBase"/>
</dbReference>
<dbReference type="GO" id="GO:0006952">
    <property type="term" value="P:defense response"/>
    <property type="evidence" value="ECO:0000318"/>
    <property type="project" value="GO_Central"/>
</dbReference>
<dbReference type="GO" id="GO:0046543">
    <property type="term" value="P:development of secondary female sexual characteristics"/>
    <property type="evidence" value="ECO:0000250"/>
    <property type="project" value="AgBase"/>
</dbReference>
<dbReference type="GO" id="GO:0007565">
    <property type="term" value="P:female pregnancy"/>
    <property type="evidence" value="ECO:0000250"/>
    <property type="project" value="AgBase"/>
</dbReference>
<dbReference type="GO" id="GO:0060397">
    <property type="term" value="P:growth hormone receptor signaling pathway via JAK-STAT"/>
    <property type="evidence" value="ECO:0000318"/>
    <property type="project" value="GO_Central"/>
</dbReference>
<dbReference type="GO" id="GO:0007595">
    <property type="term" value="P:lactation"/>
    <property type="evidence" value="ECO:0000250"/>
    <property type="project" value="AgBase"/>
</dbReference>
<dbReference type="GO" id="GO:0019915">
    <property type="term" value="P:lipid storage"/>
    <property type="evidence" value="ECO:0000250"/>
    <property type="project" value="AgBase"/>
</dbReference>
<dbReference type="GO" id="GO:0001553">
    <property type="term" value="P:luteinization"/>
    <property type="evidence" value="ECO:0000250"/>
    <property type="project" value="AgBase"/>
</dbReference>
<dbReference type="GO" id="GO:0030879">
    <property type="term" value="P:mammary gland development"/>
    <property type="evidence" value="ECO:0000250"/>
    <property type="project" value="AgBase"/>
</dbReference>
<dbReference type="GO" id="GO:0001779">
    <property type="term" value="P:natural killer cell differentiation"/>
    <property type="evidence" value="ECO:0000250"/>
    <property type="project" value="AgBase"/>
</dbReference>
<dbReference type="GO" id="GO:0043066">
    <property type="term" value="P:negative regulation of apoptotic process"/>
    <property type="evidence" value="ECO:0000250"/>
    <property type="project" value="AgBase"/>
</dbReference>
<dbReference type="GO" id="GO:0045647">
    <property type="term" value="P:negative regulation of erythrocyte differentiation"/>
    <property type="evidence" value="ECO:0000250"/>
    <property type="project" value="AgBase"/>
</dbReference>
<dbReference type="GO" id="GO:0042104">
    <property type="term" value="P:positive regulation of activated T cell proliferation"/>
    <property type="evidence" value="ECO:0000250"/>
    <property type="project" value="AgBase"/>
</dbReference>
<dbReference type="GO" id="GO:0045579">
    <property type="term" value="P:positive regulation of B cell differentiation"/>
    <property type="evidence" value="ECO:0000250"/>
    <property type="project" value="AgBase"/>
</dbReference>
<dbReference type="GO" id="GO:0008284">
    <property type="term" value="P:positive regulation of cell population proliferation"/>
    <property type="evidence" value="ECO:0000250"/>
    <property type="project" value="AgBase"/>
</dbReference>
<dbReference type="GO" id="GO:0050729">
    <property type="term" value="P:positive regulation of inflammatory response"/>
    <property type="evidence" value="ECO:0000250"/>
    <property type="project" value="AgBase"/>
</dbReference>
<dbReference type="GO" id="GO:0032743">
    <property type="term" value="P:positive regulation of interleukin-2 production"/>
    <property type="evidence" value="ECO:0000250"/>
    <property type="project" value="AgBase"/>
</dbReference>
<dbReference type="GO" id="GO:0045931">
    <property type="term" value="P:positive regulation of mitotic cell cycle"/>
    <property type="evidence" value="ECO:0000250"/>
    <property type="project" value="AgBase"/>
</dbReference>
<dbReference type="GO" id="GO:0040018">
    <property type="term" value="P:positive regulation of multicellular organism growth"/>
    <property type="evidence" value="ECO:0000250"/>
    <property type="project" value="AgBase"/>
</dbReference>
<dbReference type="GO" id="GO:0045944">
    <property type="term" value="P:positive regulation of transcription by RNA polymerase II"/>
    <property type="evidence" value="ECO:0000250"/>
    <property type="project" value="AgBase"/>
</dbReference>
<dbReference type="GO" id="GO:0030155">
    <property type="term" value="P:regulation of cell adhesion"/>
    <property type="evidence" value="ECO:0000250"/>
    <property type="project" value="AgBase"/>
</dbReference>
<dbReference type="GO" id="GO:0042127">
    <property type="term" value="P:regulation of cell population proliferation"/>
    <property type="evidence" value="ECO:0000318"/>
    <property type="project" value="GO_Central"/>
</dbReference>
<dbReference type="GO" id="GO:0030856">
    <property type="term" value="P:regulation of epithelial cell differentiation"/>
    <property type="evidence" value="ECO:0000250"/>
    <property type="project" value="AgBase"/>
</dbReference>
<dbReference type="GO" id="GO:0019218">
    <property type="term" value="P:regulation of steroid metabolic process"/>
    <property type="evidence" value="ECO:0000250"/>
    <property type="project" value="AgBase"/>
</dbReference>
<dbReference type="GO" id="GO:0006357">
    <property type="term" value="P:regulation of transcription by RNA polymerase II"/>
    <property type="evidence" value="ECO:0000318"/>
    <property type="project" value="GO_Central"/>
</dbReference>
<dbReference type="GO" id="GO:0043434">
    <property type="term" value="P:response to peptide hormone"/>
    <property type="evidence" value="ECO:0000318"/>
    <property type="project" value="GO_Central"/>
</dbReference>
<dbReference type="GO" id="GO:0043029">
    <property type="term" value="P:T cell homeostasis"/>
    <property type="evidence" value="ECO:0000250"/>
    <property type="project" value="AgBase"/>
</dbReference>
<dbReference type="CDD" id="cd10421">
    <property type="entry name" value="SH2_STAT5a"/>
    <property type="match status" value="1"/>
</dbReference>
<dbReference type="CDD" id="cd16855">
    <property type="entry name" value="STAT5_CCD"/>
    <property type="match status" value="1"/>
</dbReference>
<dbReference type="CDD" id="cd16849">
    <property type="entry name" value="STAT5_DBD"/>
    <property type="match status" value="1"/>
</dbReference>
<dbReference type="FunFam" id="1.10.532.10:FF:000002">
    <property type="entry name" value="Signal transducer and activator of transcription"/>
    <property type="match status" value="1"/>
</dbReference>
<dbReference type="FunFam" id="1.20.1050.20:FF:000002">
    <property type="entry name" value="Signal transducer and activator of transcription"/>
    <property type="match status" value="1"/>
</dbReference>
<dbReference type="FunFam" id="2.60.40.630:FF:000002">
    <property type="entry name" value="Signal transducer and activator of transcription"/>
    <property type="match status" value="1"/>
</dbReference>
<dbReference type="FunFam" id="3.30.505.10:FF:000025">
    <property type="entry name" value="Signal transducer and activator of transcription"/>
    <property type="match status" value="1"/>
</dbReference>
<dbReference type="FunFam" id="1.10.238.10:FF:000029">
    <property type="entry name" value="Signal transducer and transcription activator 6"/>
    <property type="match status" value="1"/>
</dbReference>
<dbReference type="Gene3D" id="1.10.238.10">
    <property type="entry name" value="EF-hand"/>
    <property type="match status" value="1"/>
</dbReference>
<dbReference type="Gene3D" id="3.30.505.10">
    <property type="entry name" value="SH2 domain"/>
    <property type="match status" value="1"/>
</dbReference>
<dbReference type="Gene3D" id="1.20.1050.20">
    <property type="entry name" value="STAT transcription factor, all-alpha domain"/>
    <property type="match status" value="1"/>
</dbReference>
<dbReference type="Gene3D" id="2.60.40.630">
    <property type="entry name" value="STAT transcription factor, DNA-binding domain"/>
    <property type="match status" value="1"/>
</dbReference>
<dbReference type="Gene3D" id="1.10.532.10">
    <property type="entry name" value="STAT transcription factor, N-terminal domain"/>
    <property type="match status" value="1"/>
</dbReference>
<dbReference type="InterPro" id="IPR008967">
    <property type="entry name" value="p53-like_TF_DNA-bd_sf"/>
</dbReference>
<dbReference type="InterPro" id="IPR000980">
    <property type="entry name" value="SH2"/>
</dbReference>
<dbReference type="InterPro" id="IPR036860">
    <property type="entry name" value="SH2_dom_sf"/>
</dbReference>
<dbReference type="InterPro" id="IPR001217">
    <property type="entry name" value="STAT"/>
</dbReference>
<dbReference type="InterPro" id="IPR046994">
    <property type="entry name" value="STAT5_CCD"/>
</dbReference>
<dbReference type="InterPro" id="IPR035858">
    <property type="entry name" value="STAT5a/5b_DBD"/>
</dbReference>
<dbReference type="InterPro" id="IPR048988">
    <property type="entry name" value="STAT_linker"/>
</dbReference>
<dbReference type="InterPro" id="IPR036535">
    <property type="entry name" value="STAT_N_sf"/>
</dbReference>
<dbReference type="InterPro" id="IPR013800">
    <property type="entry name" value="STAT_TF_alpha"/>
</dbReference>
<dbReference type="InterPro" id="IPR015988">
    <property type="entry name" value="STAT_TF_coiled-coil"/>
</dbReference>
<dbReference type="InterPro" id="IPR013801">
    <property type="entry name" value="STAT_TF_DNA-bd"/>
</dbReference>
<dbReference type="InterPro" id="IPR012345">
    <property type="entry name" value="STAT_TF_DNA-bd_N"/>
</dbReference>
<dbReference type="InterPro" id="IPR013799">
    <property type="entry name" value="STAT_TF_prot_interaction"/>
</dbReference>
<dbReference type="PANTHER" id="PTHR11801">
    <property type="entry name" value="SIGNAL TRANSDUCER AND ACTIVATOR OF TRANSCRIPTION"/>
    <property type="match status" value="1"/>
</dbReference>
<dbReference type="Pfam" id="PF00017">
    <property type="entry name" value="SH2"/>
    <property type="match status" value="1"/>
</dbReference>
<dbReference type="Pfam" id="PF01017">
    <property type="entry name" value="STAT_alpha"/>
    <property type="match status" value="1"/>
</dbReference>
<dbReference type="Pfam" id="PF02864">
    <property type="entry name" value="STAT_bind"/>
    <property type="match status" value="1"/>
</dbReference>
<dbReference type="Pfam" id="PF02865">
    <property type="entry name" value="STAT_int"/>
    <property type="match status" value="1"/>
</dbReference>
<dbReference type="Pfam" id="PF21354">
    <property type="entry name" value="STAT_linker"/>
    <property type="match status" value="1"/>
</dbReference>
<dbReference type="SMART" id="SM00252">
    <property type="entry name" value="SH2"/>
    <property type="match status" value="1"/>
</dbReference>
<dbReference type="SMART" id="SM00964">
    <property type="entry name" value="STAT_int"/>
    <property type="match status" value="1"/>
</dbReference>
<dbReference type="SUPFAM" id="SSF49417">
    <property type="entry name" value="p53-like transcription factors"/>
    <property type="match status" value="1"/>
</dbReference>
<dbReference type="SUPFAM" id="SSF55550">
    <property type="entry name" value="SH2 domain"/>
    <property type="match status" value="1"/>
</dbReference>
<dbReference type="SUPFAM" id="SSF47655">
    <property type="entry name" value="STAT"/>
    <property type="match status" value="1"/>
</dbReference>
<dbReference type="SUPFAM" id="SSF48092">
    <property type="entry name" value="Transcription factor STAT-4 N-domain"/>
    <property type="match status" value="1"/>
</dbReference>
<dbReference type="PROSITE" id="PS50001">
    <property type="entry name" value="SH2"/>
    <property type="match status" value="1"/>
</dbReference>
<protein>
    <recommendedName>
        <fullName>Signal transducer and activator of transcription 5A</fullName>
    </recommendedName>
    <alternativeName>
        <fullName>Mammary gland factor</fullName>
    </alternativeName>
</protein>
<comment type="function">
    <text evidence="1">Carries out a dual function: signal transduction and activation of transcription. Mediates cellular responses to the cytokine KITLG/SCF and other growth factors. May mediate cellular responses to activated FGFR1, FGFR2, FGFR3 and FGFR4. Binds to the GAS element and activates PRL-induced transcription. Regulates the expression of milk proteins during lactation (By similarity).</text>
</comment>
<comment type="subunit">
    <text evidence="3">Forms a homodimer or a heterodimer with a related family member. Binds NR3C1. Interacts with NCOA1 and SOCS7. Interacts with ERBB4 (By similarity). Interacts with EBF4 (By similarity). Interacts with CD69 (By similarity).</text>
</comment>
<comment type="subcellular location">
    <subcellularLocation>
        <location evidence="1">Cytoplasm</location>
    </subcellularLocation>
    <subcellularLocation>
        <location evidence="1">Nucleus</location>
    </subcellularLocation>
    <text evidence="1">Translocated into the nucleus in response to phosphorylation.</text>
</comment>
<comment type="PTM">
    <text evidence="4">ISGylated.</text>
</comment>
<comment type="PTM">
    <text evidence="2 3 4 6">Tyrosine phosphorylated in response to KITLG/SCF, IL2, IL3, IL7, IL15, CSF2/GMCSF, GH1, PRL, EPO and THPO (By similarity). Activated KIT promotes phosphorylation on tyrosine residues and subsequent translocation to the nucleus (By similarity). Tyrosine phosphorylated in response to constitutively activated FGFR1, FGFR2, FGFR3 and FGFR4 (By similarity). Tyrosine phosphorylation is required for DNA-binding activity and dimerization. Serine phosphorylation is also required for maximal transcriptional activity (By similarity). Tyrosine phosphorylated in response to signaling via activated FLT3; wild-type FLT3 results in much weaker phosphorylation than constitutively activated mutant FLT3. Alternatively, can be phosphorylated by JAK2 at Tyr-694 (By similarity).</text>
</comment>
<comment type="similarity">
    <text evidence="9">Belongs to the transcription factor STAT family.</text>
</comment>
<name>STA5A_BOVIN</name>
<sequence length="794" mass="90700">MAGWIQAQQLQGDALRQMQVLYGQHFPIEVRHYLAQWIESQPWDAIDLDNPQDRAQATQLLEGLVQELQKKAEHQVGEDGFLLKIKLGHYATQLQNTYDRCPMELVRCIRHILYNEQRLVREANNGSSSAGILVDAMSQKHLQINQTFEELRLVTQDTENELKKLQQTQEYFIIQYQESLRIQAQFAQLAQLNPQERLSRETALQQKQVSLEAWLQREAQTLQQYRVELAEKHQKTLQLLRKQQTIILDDELIQWKRRQQLAGNGGPPEGSLDVLQSWCEKLAEIIWQNRQQIRRAEHLCQQLPIPGPVEEMLAEVNATITDIISALVTSTFIIEKQPPQVLKTQTKFAATVRLLVGGKLNVHMNPPQVKATIISEQQAKSLLKNENTRNECSGEILNNCCVMEYHQATGTLSAHFRNMSLKRIKRADRRGAESVTEEKFTVLFESQFSVGSNELVFQVKTLSLPVVVIVHGSQDHNATATVLWDNAFAEPGRVPFAVPDKVLWPQLCEALNMKFKAEVQSNRGLTKENLVFLAQKLFNSSSSHLEDYNGMSVSWSQFNRENLPGWNYTFWQWFDGVMEVLKKHHKPHWNDGAILGFVNKQQAHDLLINKPDGTFLLRFSDSEIGGITIAWKFDSPDRNLWNLKPFTTRDFSIRSLADRLGDLNYLIYVFPDRPKDEVFSKYYTPVLAKAVDGYVKPQIKQVVPEFVSASADSAGSNATYMDQAPSPAVCPQPHYNMYPQNPDPVLDQDGEFDLDETMDVARHVEELLRRPMDSLEPSLPPPTGLFTPGRGSLS</sequence>
<organism>
    <name type="scientific">Bos taurus</name>
    <name type="common">Bovine</name>
    <dbReference type="NCBI Taxonomy" id="9913"/>
    <lineage>
        <taxon>Eukaryota</taxon>
        <taxon>Metazoa</taxon>
        <taxon>Chordata</taxon>
        <taxon>Craniata</taxon>
        <taxon>Vertebrata</taxon>
        <taxon>Euteleostomi</taxon>
        <taxon>Mammalia</taxon>
        <taxon>Eutheria</taxon>
        <taxon>Laurasiatheria</taxon>
        <taxon>Artiodactyla</taxon>
        <taxon>Ruminantia</taxon>
        <taxon>Pecora</taxon>
        <taxon>Bovidae</taxon>
        <taxon>Bovinae</taxon>
        <taxon>Bos</taxon>
    </lineage>
</organism>
<evidence type="ECO:0000250" key="1"/>
<evidence type="ECO:0000250" key="2">
    <source>
        <dbReference type="UniProtKB" id="P40763"/>
    </source>
</evidence>
<evidence type="ECO:0000250" key="3">
    <source>
        <dbReference type="UniProtKB" id="P42229"/>
    </source>
</evidence>
<evidence type="ECO:0000250" key="4">
    <source>
        <dbReference type="UniProtKB" id="P42230"/>
    </source>
</evidence>
<evidence type="ECO:0000250" key="5">
    <source>
        <dbReference type="UniProtKB" id="P51692"/>
    </source>
</evidence>
<evidence type="ECO:0000250" key="6">
    <source>
        <dbReference type="UniProtKB" id="Q62771"/>
    </source>
</evidence>
<evidence type="ECO:0000255" key="7">
    <source>
        <dbReference type="PROSITE-ProRule" id="PRU00191"/>
    </source>
</evidence>
<evidence type="ECO:0000256" key="8">
    <source>
        <dbReference type="SAM" id="MobiDB-lite"/>
    </source>
</evidence>
<evidence type="ECO:0000305" key="9"/>
<gene>
    <name type="primary">STAT5A</name>
    <name type="synonym">MGF</name>
</gene>
<reference key="1">
    <citation type="submission" date="1996-08" db="EMBL/GenBank/DDBJ databases">
        <title>Alternative STAT5A/MGF-factors in the mammary gland of ruminants.</title>
        <authorList>
            <person name="Schroeder P."/>
            <person name="Thiesen H.-J."/>
            <person name="Seyfert H.-M."/>
        </authorList>
    </citation>
    <scope>NUCLEOTIDE SEQUENCE [MRNA]</scope>
    <source>
        <tissue>Mammary gland</tissue>
    </source>
</reference>
<reference key="2">
    <citation type="journal article" date="2000" name="J. Mol. Evol.">
        <title>Molecular characterization of STAT5A- and STAT5B-encoding genes reveals extended intragenic sequence homogeneity in cattle and mouse and different degrees of divergent evolution of various domains.</title>
        <authorList>
            <person name="Seyfert H.-M."/>
            <person name="Pitra C."/>
            <person name="Meyer L."/>
            <person name="Brunner R.M."/>
            <person name="Wheeler T.T."/>
            <person name="Molenaar A."/>
            <person name="McCracken J.Y."/>
            <person name="Herrmann J."/>
            <person name="Thiesen H.-J."/>
            <person name="Schwerin M."/>
        </authorList>
    </citation>
    <scope>NUCLEOTIDE SEQUENCE [GENOMIC DNA]</scope>
</reference>
<reference key="3">
    <citation type="submission" date="1998-01" db="EMBL/GenBank/DDBJ databases">
        <title>Cloning and sequencing of the bovine STAT5A cDNA reveals significant sequence divergence with ovine.</title>
        <authorList>
            <person name="Schroeder P."/>
            <person name="Meyer L."/>
            <person name="Wheeler T.T."/>
            <person name="Thiesen H.-J."/>
            <person name="Seyfert H.-M."/>
        </authorList>
    </citation>
    <scope>NUCLEOTIDE SEQUENCE [GENOMIC DNA] OF 1-95</scope>
    <source>
        <tissue>Blood</tissue>
    </source>
</reference>
<reference key="4">
    <citation type="journal article" date="1997" name="Anim. Genet.">
        <title>A polymorphic TG repeat present within the bovine STAT5A gene.</title>
        <authorList>
            <person name="McCracken J.Y."/>
            <person name="Molenaar A.J."/>
            <person name="Snell R.J."/>
            <person name="Dayey H.W."/>
            <person name="Wilkins R.J."/>
        </authorList>
    </citation>
    <scope>NUCLEOTIDE SEQUENCE [GENOMIC DNA] OF 461-546</scope>
</reference>
<reference key="5">
    <citation type="journal article" date="1999" name="Anim. Genet.">
        <title>A single strand conformational polymorphism in the bovine gene STAT5A.</title>
        <authorList>
            <person name="Antoniou E."/>
            <person name="Hirst B.J."/>
            <person name="Grosz M."/>
            <person name="Skidmore C.J."/>
        </authorList>
    </citation>
    <scope>NUCLEOTIDE SEQUENCE [GENOMIC DNA] OF 582-677</scope>
</reference>
<reference key="6">
    <citation type="submission" date="2000-03" db="EMBL/GenBank/DDBJ databases">
        <title>Bos taurus partial sequence of STAT5a gene.</title>
        <authorList>
            <person name="LeBaron M.J."/>
            <person name="Yamashita H."/>
            <person name="Rui H."/>
        </authorList>
    </citation>
    <scope>NUCLEOTIDE SEQUENCE [GENOMIC DNA] OF 748-794</scope>
</reference>
<proteinExistence type="evidence at transcript level"/>
<accession>Q95115</accession>
<accession>O46628</accession>
<accession>O97606</accession>
<accession>Q9N0U8</accession>
<accession>Q9TUM1</accession>
<keyword id="KW-0010">Activator</keyword>
<keyword id="KW-0963">Cytoplasm</keyword>
<keyword id="KW-0238">DNA-binding</keyword>
<keyword id="KW-0421">Lactation</keyword>
<keyword id="KW-0539">Nucleus</keyword>
<keyword id="KW-0597">Phosphoprotein</keyword>
<keyword id="KW-1185">Reference proteome</keyword>
<keyword id="KW-0727">SH2 domain</keyword>
<keyword id="KW-0804">Transcription</keyword>
<keyword id="KW-0805">Transcription regulation</keyword>
<keyword id="KW-0832">Ubl conjugation</keyword>